<sequence length="42" mass="4958">YKQCHKKGGHCFPKEVLICIPPSSDFGKMDCRWKRKCCKKRS</sequence>
<accession>P86194</accession>
<organism>
    <name type="scientific">Crotalus durissus cumanensis</name>
    <name type="common">South American rattlesnake</name>
    <dbReference type="NCBI Taxonomy" id="184542"/>
    <lineage>
        <taxon>Eukaryota</taxon>
        <taxon>Metazoa</taxon>
        <taxon>Chordata</taxon>
        <taxon>Craniata</taxon>
        <taxon>Vertebrata</taxon>
        <taxon>Euteleostomi</taxon>
        <taxon>Lepidosauria</taxon>
        <taxon>Squamata</taxon>
        <taxon>Bifurcata</taxon>
        <taxon>Unidentata</taxon>
        <taxon>Episquamata</taxon>
        <taxon>Toxicofera</taxon>
        <taxon>Serpentes</taxon>
        <taxon>Colubroidea</taxon>
        <taxon>Viperidae</taxon>
        <taxon>Crotalinae</taxon>
        <taxon>Crotalus</taxon>
    </lineage>
</organism>
<dbReference type="SMR" id="P86194"/>
<dbReference type="GO" id="GO:0005576">
    <property type="term" value="C:extracellular region"/>
    <property type="evidence" value="ECO:0000314"/>
    <property type="project" value="UniProtKB"/>
</dbReference>
<dbReference type="GO" id="GO:0015459">
    <property type="term" value="F:potassium channel regulator activity"/>
    <property type="evidence" value="ECO:0007669"/>
    <property type="project" value="UniProtKB-KW"/>
</dbReference>
<dbReference type="GO" id="GO:0090729">
    <property type="term" value="F:toxin activity"/>
    <property type="evidence" value="ECO:0000314"/>
    <property type="project" value="UniProtKB"/>
</dbReference>
<dbReference type="GO" id="GO:0044564">
    <property type="term" value="P:envenomation resulting in occlusion of the pore of voltage-gated potassium channel in another organism"/>
    <property type="evidence" value="ECO:0000250"/>
    <property type="project" value="UniProtKB"/>
</dbReference>
<dbReference type="GO" id="GO:0044521">
    <property type="term" value="P:venom-mediated muscle damage in another organism"/>
    <property type="evidence" value="ECO:0000314"/>
    <property type="project" value="UniProtKB"/>
</dbReference>
<dbReference type="GO" id="GO:0044522">
    <property type="term" value="P:venom-mediated myocyte killing in another organism"/>
    <property type="evidence" value="ECO:0000314"/>
    <property type="project" value="UniProtKB"/>
</dbReference>
<dbReference type="FunFam" id="2.20.20.10:FF:000001">
    <property type="entry name" value="Crotamine"/>
    <property type="match status" value="1"/>
</dbReference>
<dbReference type="Gene3D" id="2.20.20.10">
    <property type="entry name" value="Anthopleurin-A"/>
    <property type="match status" value="1"/>
</dbReference>
<dbReference type="InterPro" id="IPR023355">
    <property type="entry name" value="Myo_ane_neurotoxin_sf"/>
</dbReference>
<dbReference type="InterPro" id="IPR000881">
    <property type="entry name" value="Myotoxin"/>
</dbReference>
<dbReference type="Pfam" id="PF00819">
    <property type="entry name" value="Myotoxins"/>
    <property type="match status" value="1"/>
</dbReference>
<dbReference type="PRINTS" id="PR00283">
    <property type="entry name" value="MYOTOXIN"/>
</dbReference>
<dbReference type="SUPFAM" id="SSF57392">
    <property type="entry name" value="Defensin-like"/>
    <property type="match status" value="1"/>
</dbReference>
<dbReference type="PROSITE" id="PS51345">
    <property type="entry name" value="MYOTOXINS_2"/>
    <property type="match status" value="1"/>
</dbReference>
<proteinExistence type="evidence at protein level"/>
<keyword id="KW-0929">Antimicrobial</keyword>
<keyword id="KW-0903">Direct protein sequencing</keyword>
<keyword id="KW-1015">Disulfide bond</keyword>
<keyword id="KW-0872">Ion channel impairing toxin</keyword>
<keyword id="KW-0959">Myotoxin</keyword>
<keyword id="KW-0528">Neurotoxin</keyword>
<keyword id="KW-0632">Potassium channel impairing toxin</keyword>
<keyword id="KW-0964">Secreted</keyword>
<keyword id="KW-0800">Toxin</keyword>
<keyword id="KW-1220">Voltage-gated potassium channel impairing toxin</keyword>
<protein>
    <recommendedName>
        <fullName evidence="4">Crotamine-IV-3</fullName>
    </recommendedName>
</protein>
<name>MYXC3_CRODM</name>
<comment type="function">
    <text evidence="2 3">Cationic peptide that possesses multiple functions. It acts as a cell-penetrating peptide (CPP), and as a potent voltage-gated potassium channel (Kv) inhibitor. It exhibits antimicrobial activities, and hind limb paralysis (By similarity). It also induces potent blockade of neuromuscular transmission in young chicken biventer cervicis preparation and potent myotoxic effect. In mice, it induces myonecrosis, upon intramuscular or subcutaneous injections (PubMed:17828447).</text>
</comment>
<comment type="subunit">
    <text evidence="1">Monomer.</text>
</comment>
<comment type="subcellular location">
    <subcellularLocation>
        <location evidence="3">Secreted</location>
    </subcellularLocation>
</comment>
<comment type="tissue specificity">
    <text evidence="6">Expressed by the venom gland.</text>
</comment>
<comment type="mass spectrometry" mass="4956.97" method="Electrospray" evidence="3"/>
<comment type="toxic dose">
    <text evidence="3">LD(50) is 0.06 mg/kg by intracerebroventricular injection into mice.</text>
</comment>
<comment type="similarity">
    <text evidence="5">Belongs to the crotamine-myotoxin family.</text>
</comment>
<feature type="chain" id="PRO_0000371461" description="Crotamine-IV-3" evidence="3">
    <location>
        <begin position="1"/>
        <end position="42"/>
    </location>
</feature>
<feature type="disulfide bond" evidence="2">
    <location>
        <begin position="4"/>
        <end position="37"/>
    </location>
</feature>
<feature type="disulfide bond" evidence="2">
    <location>
        <begin position="11"/>
        <end position="31"/>
    </location>
</feature>
<feature type="disulfide bond" evidence="2">
    <location>
        <begin position="19"/>
        <end position="38"/>
    </location>
</feature>
<evidence type="ECO:0000250" key="1"/>
<evidence type="ECO:0000250" key="2">
    <source>
        <dbReference type="UniProtKB" id="Q9PWF3"/>
    </source>
</evidence>
<evidence type="ECO:0000269" key="3">
    <source>
    </source>
</evidence>
<evidence type="ECO:0000303" key="4">
    <source>
    </source>
</evidence>
<evidence type="ECO:0000305" key="5"/>
<evidence type="ECO:0000305" key="6">
    <source>
    </source>
</evidence>
<reference key="1">
    <citation type="journal article" date="2007" name="Protein J.">
        <title>Structural and biological characterization of two crotamine isoforms IV-2 and IV-3 isolated from the Crotalus durissus cumanensis venom.</title>
        <authorList>
            <person name="Ponce-Soto L.A."/>
            <person name="Martins D."/>
            <person name="Novello J.C."/>
            <person name="Marangoni S."/>
        </authorList>
    </citation>
    <scope>PROTEIN SEQUENCE</scope>
    <scope>FUNCTION</scope>
    <scope>MASS SPECTROMETRY</scope>
    <scope>TOXIC DOSE</scope>
    <scope>SUBCELLULAR LOCATION</scope>
    <source>
        <tissue>Venom</tissue>
    </source>
</reference>